<protein>
    <recommendedName>
        <fullName evidence="1">Large ribosomal subunit protein eL8</fullName>
    </recommendedName>
    <alternativeName>
        <fullName evidence="2">50S ribosomal protein L7Ae</fullName>
    </alternativeName>
    <alternativeName>
        <fullName evidence="1">Ribosomal protein L8e</fullName>
    </alternativeName>
</protein>
<gene>
    <name evidence="1" type="primary">rpl7ae</name>
    <name type="ordered locus">TGAM_1876</name>
</gene>
<sequence length="123" mass="13424">MAKPSYVKFEVPQELAEKALEAVEIARDTGRIRKGTNETTKAVERGQAKLVIIAEDVDPEEIVAHLPPLCEEKEIPYIYVPSKKELGAAAGLEVAAASVAIIEPGKARELVEDIAMKVKELMK</sequence>
<accession>C5A1V9</accession>
<feature type="chain" id="PRO_1000205165" description="Large ribosomal subunit protein eL8">
    <location>
        <begin position="1"/>
        <end position="123"/>
    </location>
</feature>
<reference key="1">
    <citation type="journal article" date="2007" name="Genome Biol.">
        <title>Genome analysis and genome-wide proteomics of Thermococcus gammatolerans, the most radioresistant organism known amongst the Archaea.</title>
        <authorList>
            <person name="Zivanovic Y."/>
            <person name="Armengaud J."/>
            <person name="Lagorce A."/>
            <person name="Leplat C."/>
            <person name="Guerin P."/>
            <person name="Dutertre M."/>
            <person name="Anthouard V."/>
            <person name="Forterre P."/>
            <person name="Wincker P."/>
            <person name="Confalonieri F."/>
        </authorList>
    </citation>
    <scope>NUCLEOTIDE SEQUENCE [LARGE SCALE GENOMIC DNA]</scope>
    <source>
        <strain>DSM 15229 / JCM 11827 / EJ3</strain>
    </source>
</reference>
<organism>
    <name type="scientific">Thermococcus gammatolerans (strain DSM 15229 / JCM 11827 / EJ3)</name>
    <dbReference type="NCBI Taxonomy" id="593117"/>
    <lineage>
        <taxon>Archaea</taxon>
        <taxon>Methanobacteriati</taxon>
        <taxon>Methanobacteriota</taxon>
        <taxon>Thermococci</taxon>
        <taxon>Thermococcales</taxon>
        <taxon>Thermococcaceae</taxon>
        <taxon>Thermococcus</taxon>
    </lineage>
</organism>
<keyword id="KW-0963">Cytoplasm</keyword>
<keyword id="KW-1185">Reference proteome</keyword>
<keyword id="KW-0687">Ribonucleoprotein</keyword>
<keyword id="KW-0689">Ribosomal protein</keyword>
<keyword id="KW-0694">RNA-binding</keyword>
<keyword id="KW-0699">rRNA-binding</keyword>
<keyword id="KW-0819">tRNA processing</keyword>
<evidence type="ECO:0000255" key="1">
    <source>
        <dbReference type="HAMAP-Rule" id="MF_00326"/>
    </source>
</evidence>
<evidence type="ECO:0000305" key="2"/>
<comment type="function">
    <text evidence="1">Multifunctional RNA-binding protein that recognizes the K-turn motif in ribosomal RNA, the RNA component of RNase P, box H/ACA, box C/D and box C'/D' sRNAs.</text>
</comment>
<comment type="subunit">
    <text evidence="1">Part of the 50S ribosomal subunit. Probably part of the RNase P complex.</text>
</comment>
<comment type="subcellular location">
    <subcellularLocation>
        <location evidence="1">Cytoplasm</location>
    </subcellularLocation>
</comment>
<comment type="similarity">
    <text evidence="1">Belongs to the eukaryotic ribosomal protein eL8 family.</text>
</comment>
<proteinExistence type="inferred from homology"/>
<dbReference type="EMBL" id="CP001398">
    <property type="protein sequence ID" value="ACS34378.1"/>
    <property type="molecule type" value="Genomic_DNA"/>
</dbReference>
<dbReference type="RefSeq" id="WP_014122364.1">
    <property type="nucleotide sequence ID" value="NC_012804.1"/>
</dbReference>
<dbReference type="SMR" id="C5A1V9"/>
<dbReference type="STRING" id="593117.TGAM_1876"/>
<dbReference type="PaxDb" id="593117-TGAM_1876"/>
<dbReference type="GeneID" id="7988280"/>
<dbReference type="KEGG" id="tga:TGAM_1876"/>
<dbReference type="PATRIC" id="fig|593117.10.peg.1886"/>
<dbReference type="eggNOG" id="arCOG01751">
    <property type="taxonomic scope" value="Archaea"/>
</dbReference>
<dbReference type="HOGENOM" id="CLU_084513_4_0_2"/>
<dbReference type="OrthoDB" id="25810at2157"/>
<dbReference type="Proteomes" id="UP000001488">
    <property type="component" value="Chromosome"/>
</dbReference>
<dbReference type="GO" id="GO:0005737">
    <property type="term" value="C:cytoplasm"/>
    <property type="evidence" value="ECO:0007669"/>
    <property type="project" value="UniProtKB-SubCell"/>
</dbReference>
<dbReference type="GO" id="GO:1990904">
    <property type="term" value="C:ribonucleoprotein complex"/>
    <property type="evidence" value="ECO:0007669"/>
    <property type="project" value="UniProtKB-KW"/>
</dbReference>
<dbReference type="GO" id="GO:0005840">
    <property type="term" value="C:ribosome"/>
    <property type="evidence" value="ECO:0007669"/>
    <property type="project" value="UniProtKB-KW"/>
</dbReference>
<dbReference type="GO" id="GO:0004526">
    <property type="term" value="F:ribonuclease P activity"/>
    <property type="evidence" value="ECO:0007669"/>
    <property type="project" value="UniProtKB-UniRule"/>
</dbReference>
<dbReference type="GO" id="GO:0019843">
    <property type="term" value="F:rRNA binding"/>
    <property type="evidence" value="ECO:0007669"/>
    <property type="project" value="UniProtKB-KW"/>
</dbReference>
<dbReference type="GO" id="GO:0003735">
    <property type="term" value="F:structural constituent of ribosome"/>
    <property type="evidence" value="ECO:0007669"/>
    <property type="project" value="InterPro"/>
</dbReference>
<dbReference type="GO" id="GO:0042254">
    <property type="term" value="P:ribosome biogenesis"/>
    <property type="evidence" value="ECO:0007669"/>
    <property type="project" value="InterPro"/>
</dbReference>
<dbReference type="GO" id="GO:0006412">
    <property type="term" value="P:translation"/>
    <property type="evidence" value="ECO:0007669"/>
    <property type="project" value="UniProtKB-UniRule"/>
</dbReference>
<dbReference type="GO" id="GO:0001682">
    <property type="term" value="P:tRNA 5'-leader removal"/>
    <property type="evidence" value="ECO:0007669"/>
    <property type="project" value="UniProtKB-UniRule"/>
</dbReference>
<dbReference type="FunFam" id="3.30.1330.30:FF:000020">
    <property type="entry name" value="50S ribosomal protein L7Ae"/>
    <property type="match status" value="1"/>
</dbReference>
<dbReference type="Gene3D" id="3.30.1330.30">
    <property type="match status" value="1"/>
</dbReference>
<dbReference type="HAMAP" id="MF_00326">
    <property type="entry name" value="Ribosomal_eL8"/>
    <property type="match status" value="1"/>
</dbReference>
<dbReference type="InterPro" id="IPR050257">
    <property type="entry name" value="eL8/uL1-like"/>
</dbReference>
<dbReference type="InterPro" id="IPR029064">
    <property type="entry name" value="Ribosomal_eL30-like_sf"/>
</dbReference>
<dbReference type="InterPro" id="IPR004037">
    <property type="entry name" value="Ribosomal_eL8-like_CS"/>
</dbReference>
<dbReference type="InterPro" id="IPR004038">
    <property type="entry name" value="Ribosomal_eL8/eL30/eS12/Gad45"/>
</dbReference>
<dbReference type="InterPro" id="IPR018492">
    <property type="entry name" value="Ribosomal_eL8/Nhp2"/>
</dbReference>
<dbReference type="InterPro" id="IPR022481">
    <property type="entry name" value="Ribosomal_eL8_arc"/>
</dbReference>
<dbReference type="NCBIfam" id="TIGR03677">
    <property type="entry name" value="eL8_ribo"/>
    <property type="match status" value="1"/>
</dbReference>
<dbReference type="PANTHER" id="PTHR23105">
    <property type="entry name" value="RIBOSOMAL PROTEIN L7AE FAMILY MEMBER"/>
    <property type="match status" value="1"/>
</dbReference>
<dbReference type="Pfam" id="PF01248">
    <property type="entry name" value="Ribosomal_L7Ae"/>
    <property type="match status" value="1"/>
</dbReference>
<dbReference type="PRINTS" id="PR00881">
    <property type="entry name" value="L7ARS6FAMILY"/>
</dbReference>
<dbReference type="PRINTS" id="PR00884">
    <property type="entry name" value="RIBOSOMALHS6"/>
</dbReference>
<dbReference type="SUPFAM" id="SSF55315">
    <property type="entry name" value="L30e-like"/>
    <property type="match status" value="1"/>
</dbReference>
<dbReference type="PROSITE" id="PS01082">
    <property type="entry name" value="RIBOSOMAL_L7AE"/>
    <property type="match status" value="1"/>
</dbReference>
<name>RL7A_THEGJ</name>